<gene>
    <name type="primary">ubp16</name>
    <name type="ORF">SPCC1682.12c</name>
</gene>
<reference key="1">
    <citation type="journal article" date="2002" name="Nature">
        <title>The genome sequence of Schizosaccharomyces pombe.</title>
        <authorList>
            <person name="Wood V."/>
            <person name="Gwilliam R."/>
            <person name="Rajandream M.A."/>
            <person name="Lyne M.H."/>
            <person name="Lyne R."/>
            <person name="Stewart A."/>
            <person name="Sgouros J.G."/>
            <person name="Peat N."/>
            <person name="Hayles J."/>
            <person name="Baker S.G."/>
            <person name="Basham D."/>
            <person name="Bowman S."/>
            <person name="Brooks K."/>
            <person name="Brown D."/>
            <person name="Brown S."/>
            <person name="Chillingworth T."/>
            <person name="Churcher C.M."/>
            <person name="Collins M."/>
            <person name="Connor R."/>
            <person name="Cronin A."/>
            <person name="Davis P."/>
            <person name="Feltwell T."/>
            <person name="Fraser A."/>
            <person name="Gentles S."/>
            <person name="Goble A."/>
            <person name="Hamlin N."/>
            <person name="Harris D.E."/>
            <person name="Hidalgo J."/>
            <person name="Hodgson G."/>
            <person name="Holroyd S."/>
            <person name="Hornsby T."/>
            <person name="Howarth S."/>
            <person name="Huckle E.J."/>
            <person name="Hunt S."/>
            <person name="Jagels K."/>
            <person name="James K.D."/>
            <person name="Jones L."/>
            <person name="Jones M."/>
            <person name="Leather S."/>
            <person name="McDonald S."/>
            <person name="McLean J."/>
            <person name="Mooney P."/>
            <person name="Moule S."/>
            <person name="Mungall K.L."/>
            <person name="Murphy L.D."/>
            <person name="Niblett D."/>
            <person name="Odell C."/>
            <person name="Oliver K."/>
            <person name="O'Neil S."/>
            <person name="Pearson D."/>
            <person name="Quail M.A."/>
            <person name="Rabbinowitsch E."/>
            <person name="Rutherford K.M."/>
            <person name="Rutter S."/>
            <person name="Saunders D."/>
            <person name="Seeger K."/>
            <person name="Sharp S."/>
            <person name="Skelton J."/>
            <person name="Simmonds M.N."/>
            <person name="Squares R."/>
            <person name="Squares S."/>
            <person name="Stevens K."/>
            <person name="Taylor K."/>
            <person name="Taylor R.G."/>
            <person name="Tivey A."/>
            <person name="Walsh S.V."/>
            <person name="Warren T."/>
            <person name="Whitehead S."/>
            <person name="Woodward J.R."/>
            <person name="Volckaert G."/>
            <person name="Aert R."/>
            <person name="Robben J."/>
            <person name="Grymonprez B."/>
            <person name="Weltjens I."/>
            <person name="Vanstreels E."/>
            <person name="Rieger M."/>
            <person name="Schaefer M."/>
            <person name="Mueller-Auer S."/>
            <person name="Gabel C."/>
            <person name="Fuchs M."/>
            <person name="Duesterhoeft A."/>
            <person name="Fritzc C."/>
            <person name="Holzer E."/>
            <person name="Moestl D."/>
            <person name="Hilbert H."/>
            <person name="Borzym K."/>
            <person name="Langer I."/>
            <person name="Beck A."/>
            <person name="Lehrach H."/>
            <person name="Reinhardt R."/>
            <person name="Pohl T.M."/>
            <person name="Eger P."/>
            <person name="Zimmermann W."/>
            <person name="Wedler H."/>
            <person name="Wambutt R."/>
            <person name="Purnelle B."/>
            <person name="Goffeau A."/>
            <person name="Cadieu E."/>
            <person name="Dreano S."/>
            <person name="Gloux S."/>
            <person name="Lelaure V."/>
            <person name="Mottier S."/>
            <person name="Galibert F."/>
            <person name="Aves S.J."/>
            <person name="Xiang Z."/>
            <person name="Hunt C."/>
            <person name="Moore K."/>
            <person name="Hurst S.M."/>
            <person name="Lucas M."/>
            <person name="Rochet M."/>
            <person name="Gaillardin C."/>
            <person name="Tallada V.A."/>
            <person name="Garzon A."/>
            <person name="Thode G."/>
            <person name="Daga R.R."/>
            <person name="Cruzado L."/>
            <person name="Jimenez J."/>
            <person name="Sanchez M."/>
            <person name="del Rey F."/>
            <person name="Benito J."/>
            <person name="Dominguez A."/>
            <person name="Revuelta J.L."/>
            <person name="Moreno S."/>
            <person name="Armstrong J."/>
            <person name="Forsburg S.L."/>
            <person name="Cerutti L."/>
            <person name="Lowe T."/>
            <person name="McCombie W.R."/>
            <person name="Paulsen I."/>
            <person name="Potashkin J."/>
            <person name="Shpakovski G.V."/>
            <person name="Ussery D."/>
            <person name="Barrell B.G."/>
            <person name="Nurse P."/>
        </authorList>
    </citation>
    <scope>NUCLEOTIDE SEQUENCE [LARGE SCALE GENOMIC DNA]</scope>
    <source>
        <strain>972 / ATCC 24843</strain>
    </source>
</reference>
<reference key="2">
    <citation type="journal article" date="2008" name="J. Proteome Res.">
        <title>Phosphoproteome analysis of fission yeast.</title>
        <authorList>
            <person name="Wilson-Grady J.T."/>
            <person name="Villen J."/>
            <person name="Gygi S.P."/>
        </authorList>
    </citation>
    <scope>PHOSPHORYLATION [LARGE SCALE ANALYSIS] AT SER-61; THR-64 AND SER-65</scope>
    <scope>IDENTIFICATION BY MASS SPECTROMETRY</scope>
</reference>
<proteinExistence type="evidence at protein level"/>
<evidence type="ECO:0000255" key="1">
    <source>
        <dbReference type="PROSITE-ProRule" id="PRU10092"/>
    </source>
</evidence>
<evidence type="ECO:0000255" key="2">
    <source>
        <dbReference type="PROSITE-ProRule" id="PRU10093"/>
    </source>
</evidence>
<evidence type="ECO:0000256" key="3">
    <source>
        <dbReference type="SAM" id="MobiDB-lite"/>
    </source>
</evidence>
<evidence type="ECO:0000269" key="4">
    <source>
    </source>
</evidence>
<evidence type="ECO:0000305" key="5"/>
<sequence>MSLATLQGQSLDFAVKHSLDDLLKNPVRFRPAVVSSPSVPEGTYTVLNNPKQSTVSRKSFSAPTSPTRNKRSGSSSQEYKKSSGTRGDGANDFVDEDPAFIPPARILFPEEKLSMEWDNIMPNAPGLVNLGNTCFMNSVLQLMTQTPPLVQYLLSGQHSLSCRMNACVLCRMEQHVARAYPNKGTKRASAFKPSGIQSMLKVISSHFRPYRQEDAHEFMRYLVDAWQKSCLQNHKNLDHPSRETSVVHRIFGGYLRQQILCSVCKKPSNTYQALLDLSVDAKGSSLADSLKHFVHAEKLTKQNKYRCENCKQLVDASKQMTIYRAPNILTIHFKRFTFNGFQSSKISKQISYPESFNLGPYMSDPNCSCWYELIGVLVHAGGSTRSGHYYSFCKSSNGVWLKFDDDFVSNSSIDRVLNQQAYILQYKRKSTSSSKHKLNTENTVTKTSNKKRRKISF</sequence>
<protein>
    <recommendedName>
        <fullName>Probable ubiquitin carboxyl-terminal hydrolase 16</fullName>
        <ecNumber>3.4.19.12</ecNumber>
    </recommendedName>
    <alternativeName>
        <fullName>Deubiquitinating enzyme 16</fullName>
    </alternativeName>
    <alternativeName>
        <fullName>Ubiquitin thioesterase 16</fullName>
    </alternativeName>
    <alternativeName>
        <fullName>Ubiquitin-specific-processing protease 16</fullName>
    </alternativeName>
</protein>
<organism>
    <name type="scientific">Schizosaccharomyces pombe (strain 972 / ATCC 24843)</name>
    <name type="common">Fission yeast</name>
    <dbReference type="NCBI Taxonomy" id="284812"/>
    <lineage>
        <taxon>Eukaryota</taxon>
        <taxon>Fungi</taxon>
        <taxon>Dikarya</taxon>
        <taxon>Ascomycota</taxon>
        <taxon>Taphrinomycotina</taxon>
        <taxon>Schizosaccharomycetes</taxon>
        <taxon>Schizosaccharomycetales</taxon>
        <taxon>Schizosaccharomycetaceae</taxon>
        <taxon>Schizosaccharomyces</taxon>
    </lineage>
</organism>
<dbReference type="EC" id="3.4.19.12"/>
<dbReference type="EMBL" id="CU329672">
    <property type="protein sequence ID" value="CAA20678.1"/>
    <property type="molecule type" value="Genomic_DNA"/>
</dbReference>
<dbReference type="PIR" id="T41069">
    <property type="entry name" value="T41069"/>
</dbReference>
<dbReference type="RefSeq" id="NP_587805.1">
    <property type="nucleotide sequence ID" value="NM_001022798.2"/>
</dbReference>
<dbReference type="SMR" id="O74442"/>
<dbReference type="BioGRID" id="275521">
    <property type="interactions" value="28"/>
</dbReference>
<dbReference type="FunCoup" id="O74442">
    <property type="interactions" value="197"/>
</dbReference>
<dbReference type="STRING" id="284812.O74442"/>
<dbReference type="MEROPS" id="C19.A66"/>
<dbReference type="iPTMnet" id="O74442"/>
<dbReference type="PaxDb" id="4896-SPCC1682.12c.1"/>
<dbReference type="EnsemblFungi" id="SPCC1682.12c.1">
    <property type="protein sequence ID" value="SPCC1682.12c.1:pep"/>
    <property type="gene ID" value="SPCC1682.12c"/>
</dbReference>
<dbReference type="GeneID" id="2538947"/>
<dbReference type="KEGG" id="spo:2538947"/>
<dbReference type="PomBase" id="SPCC1682.12c">
    <property type="gene designation" value="ubp16"/>
</dbReference>
<dbReference type="VEuPathDB" id="FungiDB:SPCC1682.12c"/>
<dbReference type="eggNOG" id="KOG1865">
    <property type="taxonomic scope" value="Eukaryota"/>
</dbReference>
<dbReference type="HOGENOM" id="CLU_008279_10_0_1"/>
<dbReference type="InParanoid" id="O74442"/>
<dbReference type="OMA" id="MCKASQV"/>
<dbReference type="PhylomeDB" id="O74442"/>
<dbReference type="Reactome" id="R-SPO-5689880">
    <property type="pathway name" value="Ub-specific processing proteases"/>
</dbReference>
<dbReference type="Reactome" id="R-SPO-9648002">
    <property type="pathway name" value="RAS processing"/>
</dbReference>
<dbReference type="PRO" id="PR:O74442"/>
<dbReference type="Proteomes" id="UP000002485">
    <property type="component" value="Chromosome III"/>
</dbReference>
<dbReference type="GO" id="GO:0005829">
    <property type="term" value="C:cytosol"/>
    <property type="evidence" value="ECO:0000318"/>
    <property type="project" value="GO_Central"/>
</dbReference>
<dbReference type="GO" id="GO:0005730">
    <property type="term" value="C:nucleolus"/>
    <property type="evidence" value="ECO:0000314"/>
    <property type="project" value="PomBase"/>
</dbReference>
<dbReference type="GO" id="GO:0005634">
    <property type="term" value="C:nucleus"/>
    <property type="evidence" value="ECO:0007005"/>
    <property type="project" value="PomBase"/>
</dbReference>
<dbReference type="GO" id="GO:0004843">
    <property type="term" value="F:cysteine-type deubiquitinase activity"/>
    <property type="evidence" value="ECO:0000318"/>
    <property type="project" value="GO_Central"/>
</dbReference>
<dbReference type="GO" id="GO:0101005">
    <property type="term" value="F:deubiquitinase activity"/>
    <property type="evidence" value="ECO:0000314"/>
    <property type="project" value="PomBase"/>
</dbReference>
<dbReference type="GO" id="GO:0140492">
    <property type="term" value="F:metal-dependent deubiquitinase activity"/>
    <property type="evidence" value="ECO:0007005"/>
    <property type="project" value="PomBase"/>
</dbReference>
<dbReference type="GO" id="GO:0016579">
    <property type="term" value="P:protein deubiquitination"/>
    <property type="evidence" value="ECO:0007669"/>
    <property type="project" value="InterPro"/>
</dbReference>
<dbReference type="GO" id="GO:0006508">
    <property type="term" value="P:proteolysis"/>
    <property type="evidence" value="ECO:0007669"/>
    <property type="project" value="UniProtKB-KW"/>
</dbReference>
<dbReference type="GO" id="GO:0031647">
    <property type="term" value="P:regulation of protein stability"/>
    <property type="evidence" value="ECO:0000318"/>
    <property type="project" value="GO_Central"/>
</dbReference>
<dbReference type="CDD" id="cd02661">
    <property type="entry name" value="Peptidase_C19E"/>
    <property type="match status" value="1"/>
</dbReference>
<dbReference type="FunFam" id="3.90.70.10:FF:000119">
    <property type="entry name" value="Ubiquitin specific peptidase 36"/>
    <property type="match status" value="1"/>
</dbReference>
<dbReference type="Gene3D" id="3.90.70.10">
    <property type="entry name" value="Cysteine proteinases"/>
    <property type="match status" value="1"/>
</dbReference>
<dbReference type="InterPro" id="IPR038765">
    <property type="entry name" value="Papain-like_cys_pep_sf"/>
</dbReference>
<dbReference type="InterPro" id="IPR050164">
    <property type="entry name" value="Peptidase_C19"/>
</dbReference>
<dbReference type="InterPro" id="IPR001394">
    <property type="entry name" value="Peptidase_C19_UCH"/>
</dbReference>
<dbReference type="InterPro" id="IPR018200">
    <property type="entry name" value="USP_CS"/>
</dbReference>
<dbReference type="InterPro" id="IPR028889">
    <property type="entry name" value="USP_dom"/>
</dbReference>
<dbReference type="PANTHER" id="PTHR24006">
    <property type="entry name" value="UBIQUITIN CARBOXYL-TERMINAL HYDROLASE"/>
    <property type="match status" value="1"/>
</dbReference>
<dbReference type="PANTHER" id="PTHR24006:SF758">
    <property type="entry name" value="UBIQUITIN CARBOXYL-TERMINAL HYDROLASE 36"/>
    <property type="match status" value="1"/>
</dbReference>
<dbReference type="Pfam" id="PF00443">
    <property type="entry name" value="UCH"/>
    <property type="match status" value="1"/>
</dbReference>
<dbReference type="SUPFAM" id="SSF54001">
    <property type="entry name" value="Cysteine proteinases"/>
    <property type="match status" value="1"/>
</dbReference>
<dbReference type="PROSITE" id="PS00972">
    <property type="entry name" value="USP_1"/>
    <property type="match status" value="1"/>
</dbReference>
<dbReference type="PROSITE" id="PS00973">
    <property type="entry name" value="USP_2"/>
    <property type="match status" value="1"/>
</dbReference>
<dbReference type="PROSITE" id="PS50235">
    <property type="entry name" value="USP_3"/>
    <property type="match status" value="1"/>
</dbReference>
<comment type="catalytic activity">
    <reaction>
        <text>Thiol-dependent hydrolysis of ester, thioester, amide, peptide and isopeptide bonds formed by the C-terminal Gly of ubiquitin (a 76-residue protein attached to proteins as an intracellular targeting signal).</text>
        <dbReference type="EC" id="3.4.19.12"/>
    </reaction>
</comment>
<comment type="similarity">
    <text evidence="5">Belongs to the peptidase C19 family.</text>
</comment>
<accession>O74442</accession>
<keyword id="KW-0378">Hydrolase</keyword>
<keyword id="KW-0597">Phosphoprotein</keyword>
<keyword id="KW-0645">Protease</keyword>
<keyword id="KW-1185">Reference proteome</keyword>
<keyword id="KW-0788">Thiol protease</keyword>
<keyword id="KW-0833">Ubl conjugation pathway</keyword>
<feature type="chain" id="PRO_0000248399" description="Probable ubiquitin carboxyl-terminal hydrolase 16">
    <location>
        <begin position="1"/>
        <end position="457"/>
    </location>
</feature>
<feature type="domain" description="USP">
    <location>
        <begin position="125"/>
        <end position="429"/>
    </location>
</feature>
<feature type="region of interest" description="Disordered" evidence="3">
    <location>
        <begin position="34"/>
        <end position="97"/>
    </location>
</feature>
<feature type="region of interest" description="Disordered" evidence="3">
    <location>
        <begin position="434"/>
        <end position="457"/>
    </location>
</feature>
<feature type="compositionally biased region" description="Polar residues" evidence="3">
    <location>
        <begin position="45"/>
        <end position="67"/>
    </location>
</feature>
<feature type="compositionally biased region" description="Basic residues" evidence="3">
    <location>
        <begin position="448"/>
        <end position="457"/>
    </location>
</feature>
<feature type="active site" description="Nucleophile" evidence="1 2">
    <location>
        <position position="134"/>
    </location>
</feature>
<feature type="active site" description="Proton acceptor" evidence="1 2">
    <location>
        <position position="388"/>
    </location>
</feature>
<feature type="modified residue" description="Phosphoserine" evidence="4">
    <location>
        <position position="61"/>
    </location>
</feature>
<feature type="modified residue" description="Phosphothreonine" evidence="4">
    <location>
        <position position="64"/>
    </location>
</feature>
<feature type="modified residue" description="Phosphoserine" evidence="4">
    <location>
        <position position="65"/>
    </location>
</feature>
<name>UBP16_SCHPO</name>